<dbReference type="EC" id="1.-.-.-" evidence="7"/>
<dbReference type="EMBL" id="LC079035">
    <property type="protein sequence ID" value="BAV32146.1"/>
    <property type="molecule type" value="Genomic_DNA"/>
</dbReference>
<dbReference type="SMR" id="A0A1B4XBJ9"/>
<dbReference type="GlyCosmos" id="A0A1B4XBJ9">
    <property type="glycosylation" value="4 sites, No reported glycans"/>
</dbReference>
<dbReference type="GO" id="GO:0016020">
    <property type="term" value="C:membrane"/>
    <property type="evidence" value="ECO:0007669"/>
    <property type="project" value="UniProtKB-SubCell"/>
</dbReference>
<dbReference type="GO" id="GO:0020037">
    <property type="term" value="F:heme binding"/>
    <property type="evidence" value="ECO:0007669"/>
    <property type="project" value="InterPro"/>
</dbReference>
<dbReference type="GO" id="GO:0005506">
    <property type="term" value="F:iron ion binding"/>
    <property type="evidence" value="ECO:0007669"/>
    <property type="project" value="InterPro"/>
</dbReference>
<dbReference type="GO" id="GO:0004497">
    <property type="term" value="F:monooxygenase activity"/>
    <property type="evidence" value="ECO:0007669"/>
    <property type="project" value="UniProtKB-KW"/>
</dbReference>
<dbReference type="GO" id="GO:0016705">
    <property type="term" value="F:oxidoreductase activity, acting on paired donors, with incorporation or reduction of molecular oxygen"/>
    <property type="evidence" value="ECO:0007669"/>
    <property type="project" value="InterPro"/>
</dbReference>
<dbReference type="GO" id="GO:0017000">
    <property type="term" value="P:antibiotic biosynthetic process"/>
    <property type="evidence" value="ECO:0007669"/>
    <property type="project" value="UniProtKB-KW"/>
</dbReference>
<dbReference type="GO" id="GO:0019748">
    <property type="term" value="P:secondary metabolic process"/>
    <property type="evidence" value="ECO:0007669"/>
    <property type="project" value="UniProtKB-ARBA"/>
</dbReference>
<dbReference type="CDD" id="cd11041">
    <property type="entry name" value="CYP503A1-like"/>
    <property type="match status" value="1"/>
</dbReference>
<dbReference type="Gene3D" id="1.10.630.10">
    <property type="entry name" value="Cytochrome P450"/>
    <property type="match status" value="1"/>
</dbReference>
<dbReference type="InterPro" id="IPR001128">
    <property type="entry name" value="Cyt_P450"/>
</dbReference>
<dbReference type="InterPro" id="IPR002403">
    <property type="entry name" value="Cyt_P450_E_grp-IV"/>
</dbReference>
<dbReference type="InterPro" id="IPR036396">
    <property type="entry name" value="Cyt_P450_sf"/>
</dbReference>
<dbReference type="PANTHER" id="PTHR46206">
    <property type="entry name" value="CYTOCHROME P450"/>
    <property type="match status" value="1"/>
</dbReference>
<dbReference type="PANTHER" id="PTHR46206:SF9">
    <property type="entry name" value="CYTOCHROME P450"/>
    <property type="match status" value="1"/>
</dbReference>
<dbReference type="Pfam" id="PF00067">
    <property type="entry name" value="p450"/>
    <property type="match status" value="1"/>
</dbReference>
<dbReference type="PRINTS" id="PR00465">
    <property type="entry name" value="EP450IV"/>
</dbReference>
<dbReference type="SUPFAM" id="SSF48264">
    <property type="entry name" value="Cytochrome P450"/>
    <property type="match status" value="1"/>
</dbReference>
<keyword id="KW-0045">Antibiotic biosynthesis</keyword>
<keyword id="KW-0325">Glycoprotein</keyword>
<keyword id="KW-0349">Heme</keyword>
<keyword id="KW-0408">Iron</keyword>
<keyword id="KW-0472">Membrane</keyword>
<keyword id="KW-0479">Metal-binding</keyword>
<keyword id="KW-0503">Monooxygenase</keyword>
<keyword id="KW-0560">Oxidoreductase</keyword>
<keyword id="KW-0812">Transmembrane</keyword>
<keyword id="KW-1133">Transmembrane helix</keyword>
<name>SDNB_SORAA</name>
<organism>
    <name type="scientific">Sordaria araneosa</name>
    <name type="common">Pleurage araneosa</name>
    <dbReference type="NCBI Taxonomy" id="573841"/>
    <lineage>
        <taxon>Eukaryota</taxon>
        <taxon>Fungi</taxon>
        <taxon>Dikarya</taxon>
        <taxon>Ascomycota</taxon>
        <taxon>Pezizomycotina</taxon>
        <taxon>Sordariomycetes</taxon>
        <taxon>Sordariomycetidae</taxon>
        <taxon>Sordariales</taxon>
        <taxon>Sordariaceae</taxon>
        <taxon>Sordaria</taxon>
    </lineage>
</organism>
<feature type="chain" id="PRO_0000441049" description="Cytochrome P450 monooxygenase sdnB">
    <location>
        <begin position="1"/>
        <end position="545"/>
    </location>
</feature>
<feature type="transmembrane region" description="Helical" evidence="2">
    <location>
        <begin position="30"/>
        <end position="50"/>
    </location>
</feature>
<feature type="transmembrane region" description="Helical" evidence="2">
    <location>
        <begin position="322"/>
        <end position="342"/>
    </location>
</feature>
<feature type="binding site" description="axial binding residue" evidence="1">
    <location>
        <position position="486"/>
    </location>
    <ligand>
        <name>heme</name>
        <dbReference type="ChEBI" id="CHEBI:30413"/>
    </ligand>
    <ligandPart>
        <name>Fe</name>
        <dbReference type="ChEBI" id="CHEBI:18248"/>
    </ligandPart>
</feature>
<feature type="glycosylation site" description="N-linked (GlcNAc...) asparagine" evidence="3">
    <location>
        <position position="5"/>
    </location>
</feature>
<feature type="glycosylation site" description="N-linked (GlcNAc...) asparagine" evidence="3">
    <location>
        <position position="276"/>
    </location>
</feature>
<feature type="glycosylation site" description="N-linked (GlcNAc...) asparagine" evidence="3">
    <location>
        <position position="393"/>
    </location>
</feature>
<feature type="glycosylation site" description="N-linked (GlcNAc...) asparagine" evidence="3">
    <location>
        <position position="476"/>
    </location>
</feature>
<proteinExistence type="inferred from homology"/>
<comment type="function">
    <text evidence="4">Cytochrome P450 monooxygenase; part of the gene cluster that mediates the biosynthesis of sordarin and hypoxysordarin, glycoside antibiotics with a unique tetracyclic diterpene aglycone structure (PubMed:27072286). First, the geranylgeranyl diphosphate synthase sdnC constructs GGDP from farnesyl diphosphate and isopentenyl diphosphate (PubMed:27072286). The diterpene cyclase sdnA then catalyzes the cyclization of GGDP to afford cycloaraneosene (PubMed:27072286). Cycloaraneosene is then hydroxylated four times by the putative cytochrome P450 monooxygenases sdnB, sdnE, sdnF and sdnH to give a hydroxylated cycloaraneosene derivative such as cycloaraneosene-8,9,13,19-tetraol (PubMed:27072286). Although the order of the hydroxylations is unclear, at least C8, C9 and C13 of the cycloaraneosene skeleton are hydroxylated before the sordaricin formation (PubMed:27072286). Dehydration of the 13-hydroxy group of the hydroxylated cycloaraneosene derivative might be catalyzed by an unassigned hypothetical protein such as sdnG and sdnP to construct the cyclopentadiene moiety (PubMed:27072286). The FAD-dependent oxidoreductase sdnN is proposed to catalyze the oxidation at C9 of the hydroxylated cycloaraneosene derivative and also catalyze the Baeyer-Villiger oxidation to give the lactone intermediate (PubMed:27072286). The presumed lactone intermediate would be hydrolyzed to give an acrolein moiety and a carboxylate moiety (PubMed:27072286). Then, [4+2]cycloaddition would occur between the acrolein moiety and the cyclopentadiene moiety to give sordaricin (PubMed:27072286). SdnN might also be involved in the [4+2]cycloaddition after the hypothesized oxidation to accommodate the oxidized product and prompt the [4+2]cycloaddition (PubMed:27072286). GDP-6-deoxy-D-altrose may be biosynthesized from GDP-D-mannose by the putative GDP-mannose-4,6-dehydratase sdnI and the short-chain dehydrogenase sdnK (PubMed:27072286). The glycosyltransferase sdnJ catalyzes the attachment of 6-deoxy-D-altrose onto the 19-hydroxy group of sordaricin to give 4'-O-demethylsordarin (PubMed:27072286). The methyltransferase sdnD would complete the biosynthesis of sordarin (PubMed:27072286). Sordarin can be further modified into hypoxysordarin (PubMed:27072286). The unique acyl chain at the 3'-hydroxy group of hypoxysordarin would be constructed by an iterative type I PKS sdnO and the trans-acting polyketide methyltransferase sdnL. SdnL would be responsible for the introduction of an alpha-methyl group of the polyketide chain (PubMed:27072286). Alternatively, the beta-lactamase-like protein sdnR might be responsible for the cleavage and transfer of the polyketide chain from the PKS sdnO to sordarin (PubMed:27072286). Two putative cytochrome P450 monooxygenases, sdnQ and sdnT, might catalyze the epoxidations of the polyketide chain to complete the biosynthesis of hypoxysordarin (PubMed:27072286). Transcriptional regulators sdnM and sdnS are presumably encoded for the transcriptional regulation of the expression of the sdn gene cluster (PubMed:27072286).</text>
</comment>
<comment type="cofactor">
    <cofactor evidence="1">
        <name>heme</name>
        <dbReference type="ChEBI" id="CHEBI:30413"/>
    </cofactor>
</comment>
<comment type="pathway">
    <text evidence="7">Antibiotic biosynthesis.</text>
</comment>
<comment type="subcellular location">
    <subcellularLocation>
        <location evidence="2">Membrane</location>
        <topology evidence="2">Multi-pass membrane protein</topology>
    </subcellularLocation>
</comment>
<comment type="similarity">
    <text evidence="6">Belongs to the cytochrome P450 family.</text>
</comment>
<protein>
    <recommendedName>
        <fullName evidence="5">Cytochrome P450 monooxygenase sdnB</fullName>
        <ecNumber evidence="7">1.-.-.-</ecNumber>
    </recommendedName>
    <alternativeName>
        <fullName evidence="5">Sordarin/hypoxysordarin biosynthesis cluster protein B</fullName>
    </alternativeName>
</protein>
<evidence type="ECO:0000250" key="1">
    <source>
        <dbReference type="UniProtKB" id="P04798"/>
    </source>
</evidence>
<evidence type="ECO:0000255" key="2"/>
<evidence type="ECO:0000255" key="3">
    <source>
        <dbReference type="PROSITE-ProRule" id="PRU00498"/>
    </source>
</evidence>
<evidence type="ECO:0000269" key="4">
    <source>
    </source>
</evidence>
<evidence type="ECO:0000303" key="5">
    <source>
    </source>
</evidence>
<evidence type="ECO:0000305" key="6"/>
<evidence type="ECO:0000305" key="7">
    <source>
    </source>
</evidence>
<reference key="1">
    <citation type="journal article" date="2016" name="J. Antibiot.">
        <title>Genome mining of the sordarin biosynthetic gene cluster from Sordaria araneosa Cain ATCC 36386: characterization of cycloaraneosene synthase and GDP-6-deoxyaltrose transferase.</title>
        <authorList>
            <person name="Kudo F."/>
            <person name="Matsuura Y."/>
            <person name="Hayashi T."/>
            <person name="Fukushima M."/>
            <person name="Eguchi T."/>
        </authorList>
    </citation>
    <scope>NUCLEOTIDE SEQUENCE [GENOMIC DNA]</scope>
    <scope>FUNCTION</scope>
    <scope>PATHWAY</scope>
    <source>
        <strain>ATCC 36386 / NRRL 3196</strain>
    </source>
</reference>
<accession>A0A1B4XBJ9</accession>
<gene>
    <name evidence="5" type="primary">sdnB</name>
</gene>
<sequence>MEVHNATSFLGHGGMAQHLQPVLESPFAESILALTPLQGIALFLCLFWGYSSLTLHRRIKVPGAPVHGYWSWLEPTWLLQLRYAKDAHKIIASGYKRYNVNGKPFVLRRQDLDITVLPTKYVAELRTIPNAKLSRGKANFMEWGDQWAMKNLWSHIDLPIKVISENRHGQQGKYLEAMRKEFEHAMEVEMPQVDDWTAVDIQKIIQMILARMVGKMIVGKEACRSPEWLDLAEHFTEDFVGASIIMRMLPKWTHPLVTNLLPQRWRMRRRLRDAVNITNPCVTRHREAREKRAKGIEVDYEDNMVGWMLDNAPDKQYVLDHLPILILIILVPAAHTTAMGISNLLFHLCEYPEWGAKLLKEINDVNNEFGPIGERLPAKDWVTKLDLLDSFFNESQRLSQPLSITPNRYAVEDFTFKDGLHIPKGALLGWVSIHNQIDPKIAPDPDTFDPLRSYRKRQVSAEENAKHLAGQPSLENLTFGYGSQACPGRNIAITVLKMILSRILRDYEFKFGDGQARPQNIYLLEFIIPDPKAKLMVRKREASVS</sequence>